<reference key="1">
    <citation type="journal article" date="1990" name="Agric. Biol. Chem.">
        <title>Cloning and nucleotide sequence of an esterase gene from Pseudomonas fluorescens and expression of the gene in Escherichia coli.</title>
        <authorList>
            <person name="Choi K.D."/>
            <person name="Jeohn G.H."/>
            <person name="Rhee J.S."/>
            <person name="Yoo O.J."/>
        </authorList>
    </citation>
    <scope>NUCLEOTIDE SEQUENCE [GENOMIC DNA]</scope>
    <scope>PROTEIN SEQUENCE OF 2-18</scope>
    <scope>FUNCTION</scope>
    <scope>CATALYTIC ACTIVITY</scope>
    <source>
        <strain>SIK WI</strain>
    </source>
</reference>
<reference key="2">
    <citation type="journal article" date="1995" name="Microbiology">
        <title>A bacterial esterase is homologous with non-haem haloperoxidases and displays brominating activity.</title>
        <authorList>
            <person name="Pelletier I."/>
            <person name="Altenbuchner J."/>
        </authorList>
    </citation>
    <scope>NUCLEOTIDE SEQUENCE [GENOMIC DNA]</scope>
    <scope>FUNCTION</scope>
    <scope>CATALYTIC ACTIVITY</scope>
    <scope>BIOPHYSICOCHEMICAL PROPERTIES</scope>
    <source>
        <strain>SIK WI</strain>
    </source>
</reference>
<reference key="3">
    <citation type="journal article" date="1998" name="J. Biotechnol.">
        <title>Enantioselectivity of a recombinant esterase from Pseudomonas fluorescens towards alcohols and carboxylic acids.</title>
        <authorList>
            <person name="Krebsfaenger N."/>
            <person name="Schierholz K."/>
            <person name="Bornscheuer U.T."/>
        </authorList>
    </citation>
    <scope>FUNCTION</scope>
    <scope>CATALYTIC ACTIVITY</scope>
</reference>
<reference key="4">
    <citation type="journal article" date="2005" name="Angew. Chem. Int. Ed.">
        <title>Molecular basis of perhydrolase activity in serine hydrolases.</title>
        <authorList>
            <person name="Bernhardt P."/>
            <person name="Hult K."/>
            <person name="Kazlauskas R.J."/>
        </authorList>
    </citation>
    <scope>FUNCTION</scope>
    <scope>CATALYTIC ACTIVITY</scope>
    <scope>BIOPHYSICOCHEMICAL PROPERTIES</scope>
    <scope>MUTAGENESIS OF LEU-30; TYR-70; MET-96; ASP-100; THR-123 AND PHE-228</scope>
</reference>
<reference key="5">
    <citation type="journal article" date="2012" name="Chemistry">
        <title>Revised molecular basis of the promiscuous carboxylic acid perhydrolase activity in serine hydrolases.</title>
        <authorList>
            <person name="Yin D.T."/>
            <person name="Kazlauskas R.J."/>
        </authorList>
    </citation>
    <scope>FUNCTION</scope>
    <scope>CATALYTIC ACTIVITY</scope>
    <scope>BIOPHYSICOCHEMICAL PROPERTIES</scope>
    <scope>MUTAGENESIS OF LEU-30</scope>
</reference>
<reference evidence="17" key="6">
    <citation type="journal article" date="2004" name="Acta Crystallogr. D">
        <title>Structure of an aryl esterase from Pseudomonas fluorescens.</title>
        <authorList>
            <person name="Cheeseman J.D."/>
            <person name="Tocilj A."/>
            <person name="Park S."/>
            <person name="Schrag J.D."/>
            <person name="Kazlauskas R.J."/>
        </authorList>
    </citation>
    <scope>X-RAY CRYSTALLOGRAPHY (1.8 ANGSTROMS) OF 2-272</scope>
    <scope>FUNCTION</scope>
    <scope>SUBUNIT</scope>
    <scope>ACTIVE SITE</scope>
</reference>
<reference evidence="18 19" key="7">
    <citation type="journal article" date="2010" name="Biochemistry">
        <title>Switching catalysis from hydrolysis to perhydrolysis in Pseudomonas fluorescens esterase.</title>
        <authorList>
            <person name="Yin D.L."/>
            <person name="Bernhardt P."/>
            <person name="Morley K.L."/>
            <person name="Jiang Y."/>
            <person name="Cheeseman J.D."/>
            <person name="Purpero V."/>
            <person name="Schrag J.D."/>
            <person name="Kazlauskas R.J."/>
        </authorList>
    </citation>
    <scope>X-RAY CRYSTALLOGRAPHY (1.90 ANGSTROMS) OF 2-272 OF MUTANT PRO-30 IN COMPLEX WITH ACETATE</scope>
    <scope>FUNCTION</scope>
    <scope>CATALYTIC ACTIVITY</scope>
    <scope>BIOPHYSICOCHEMICAL PROPERTIES</scope>
    <scope>MUTAGENESIS OF LEU-30 AND PHE-58</scope>
</reference>
<reference evidence="20" key="8">
    <citation type="journal article" date="2011" name="ChemBioChem">
        <title>Different active-site loop orientation in serine hydrolases versus acyltransferases.</title>
        <authorList>
            <person name="Jiang Y."/>
            <person name="Morley K.L."/>
            <person name="Schrag J.D."/>
            <person name="Kazlauskas R.J."/>
        </authorList>
    </citation>
    <scope>X-RAY CRYSTALLOGRAPHY (1.65 ANGSTROMS) OF 2-272 IN COMPLEX WITH A SULFONATE TRANSITION-STATE ANALOG</scope>
</reference>
<reference evidence="21 22" key="9">
    <citation type="journal article" date="2013" name="Chemistry">
        <title>New structural motif for carboxylic acid perhydrolases.</title>
        <authorList>
            <person name="Yin D.T."/>
            <person name="Purpero V.M."/>
            <person name="Fujii R."/>
            <person name="Jing Q."/>
            <person name="Kazlauskas R.J."/>
        </authorList>
    </citation>
    <scope>X-RAY CRYSTALLOGRAPHY (2.00 ANGSTROMS) OF 2-272 OF MUTANT ILE-30 IN COMPLEX WITH ACETATE AND HYDROGEN PEROXIDE</scope>
    <scope>MUTAGENESIS OF LEU-30</scope>
</reference>
<keyword id="KW-0002">3D-structure</keyword>
<keyword id="KW-0903">Direct protein sequencing</keyword>
<keyword id="KW-0378">Hydrolase</keyword>
<keyword id="KW-0560">Oxidoreductase</keyword>
<keyword id="KW-0575">Peroxidase</keyword>
<dbReference type="EC" id="3.1.1.2" evidence="2 4 8 9"/>
<dbReference type="EC" id="1.-.-.-"/>
<dbReference type="EMBL" id="D12484">
    <property type="protein sequence ID" value="BAA02052.1"/>
    <property type="status" value="ALT_FRAME"/>
    <property type="molecule type" value="Genomic_DNA"/>
</dbReference>
<dbReference type="EMBL" id="U12537">
    <property type="protein sequence ID" value="AAB60168.1"/>
    <property type="molecule type" value="Genomic_DNA"/>
</dbReference>
<dbReference type="PIR" id="JQ0606">
    <property type="entry name" value="JQ0606"/>
</dbReference>
<dbReference type="PDB" id="1VA4">
    <property type="method" value="X-ray"/>
    <property type="resolution" value="1.80 A"/>
    <property type="chains" value="A/B/C/D/E/F=2-272"/>
</dbReference>
<dbReference type="PDB" id="3HEA">
    <property type="method" value="X-ray"/>
    <property type="resolution" value="1.90 A"/>
    <property type="chains" value="A/B/C/D/E/F=2-272"/>
</dbReference>
<dbReference type="PDB" id="3HI4">
    <property type="method" value="X-ray"/>
    <property type="resolution" value="2.25 A"/>
    <property type="chains" value="A/B/C/D/E/F=2-272"/>
</dbReference>
<dbReference type="PDB" id="3IA2">
    <property type="method" value="X-ray"/>
    <property type="resolution" value="1.65 A"/>
    <property type="chains" value="A/B/C/D/E/F=2-272"/>
</dbReference>
<dbReference type="PDB" id="3T4U">
    <property type="method" value="X-ray"/>
    <property type="resolution" value="2.02 A"/>
    <property type="chains" value="A/B/C/D/E/F=2-272"/>
</dbReference>
<dbReference type="PDB" id="3T52">
    <property type="method" value="X-ray"/>
    <property type="resolution" value="2.00 A"/>
    <property type="chains" value="A/B/C/D/E/F=2-272"/>
</dbReference>
<dbReference type="PDB" id="8PI1">
    <property type="method" value="X-ray"/>
    <property type="resolution" value="2.50 A"/>
    <property type="chains" value="A/B/C/D/E/F/G/H/I/J/K/L/M/N/O=1-272"/>
</dbReference>
<dbReference type="PDBsum" id="1VA4"/>
<dbReference type="PDBsum" id="3HEA"/>
<dbReference type="PDBsum" id="3HI4"/>
<dbReference type="PDBsum" id="3IA2"/>
<dbReference type="PDBsum" id="3T4U"/>
<dbReference type="PDBsum" id="3T52"/>
<dbReference type="PDBsum" id="8PI1"/>
<dbReference type="SMR" id="P22862"/>
<dbReference type="ESTHER" id="psefl-este">
    <property type="family name" value="Haloperoxidase"/>
</dbReference>
<dbReference type="PeroxiBase" id="5910">
    <property type="entry name" value="PfHalNPrx03_SIKWI"/>
</dbReference>
<dbReference type="SABIO-RK" id="P22862"/>
<dbReference type="EvolutionaryTrace" id="P22862"/>
<dbReference type="GO" id="GO:0004064">
    <property type="term" value="F:arylesterase activity"/>
    <property type="evidence" value="ECO:0007669"/>
    <property type="project" value="UniProtKB-EC"/>
</dbReference>
<dbReference type="GO" id="GO:0004601">
    <property type="term" value="F:peroxidase activity"/>
    <property type="evidence" value="ECO:0007669"/>
    <property type="project" value="UniProtKB-KW"/>
</dbReference>
<dbReference type="FunFam" id="3.40.50.1820:FF:000205">
    <property type="entry name" value="Non-haem bromoperoxidase BPO-A2"/>
    <property type="match status" value="1"/>
</dbReference>
<dbReference type="Gene3D" id="3.40.50.1820">
    <property type="entry name" value="alpha/beta hydrolase"/>
    <property type="match status" value="1"/>
</dbReference>
<dbReference type="InterPro" id="IPR050471">
    <property type="entry name" value="AB_hydrolase"/>
</dbReference>
<dbReference type="InterPro" id="IPR000073">
    <property type="entry name" value="AB_hydrolase_1"/>
</dbReference>
<dbReference type="InterPro" id="IPR029058">
    <property type="entry name" value="AB_hydrolase_fold"/>
</dbReference>
<dbReference type="InterPro" id="IPR000639">
    <property type="entry name" value="Epox_hydrolase-like"/>
</dbReference>
<dbReference type="PANTHER" id="PTHR43433">
    <property type="entry name" value="HYDROLASE, ALPHA/BETA FOLD FAMILY PROTEIN"/>
    <property type="match status" value="1"/>
</dbReference>
<dbReference type="PANTHER" id="PTHR43433:SF4">
    <property type="entry name" value="NON-HEME CHLOROPEROXIDASE-RELATED"/>
    <property type="match status" value="1"/>
</dbReference>
<dbReference type="Pfam" id="PF00561">
    <property type="entry name" value="Abhydrolase_1"/>
    <property type="match status" value="1"/>
</dbReference>
<dbReference type="PRINTS" id="PR00111">
    <property type="entry name" value="ABHYDROLASE"/>
</dbReference>
<dbReference type="PRINTS" id="PR00412">
    <property type="entry name" value="EPOXHYDRLASE"/>
</dbReference>
<dbReference type="SUPFAM" id="SSF53474">
    <property type="entry name" value="alpha/beta-Hydrolases"/>
    <property type="match status" value="1"/>
</dbReference>
<accession>P22862</accession>
<evidence type="ECO:0000255" key="1"/>
<evidence type="ECO:0000269" key="2">
    <source>
    </source>
</evidence>
<evidence type="ECO:0000269" key="3">
    <source>
    </source>
</evidence>
<evidence type="ECO:0000269" key="4">
    <source>
    </source>
</evidence>
<evidence type="ECO:0000269" key="5">
    <source>
    </source>
</evidence>
<evidence type="ECO:0000269" key="6">
    <source>
    </source>
</evidence>
<evidence type="ECO:0000269" key="7">
    <source>
    </source>
</evidence>
<evidence type="ECO:0000269" key="8">
    <source>
    </source>
</evidence>
<evidence type="ECO:0000269" key="9">
    <source>
    </source>
</evidence>
<evidence type="ECO:0000303" key="10">
    <source>
    </source>
</evidence>
<evidence type="ECO:0000303" key="11">
    <source>
    </source>
</evidence>
<evidence type="ECO:0000303" key="12">
    <source>
    </source>
</evidence>
<evidence type="ECO:0000305" key="13"/>
<evidence type="ECO:0000305" key="14">
    <source>
    </source>
</evidence>
<evidence type="ECO:0000305" key="15">
    <source>
    </source>
</evidence>
<evidence type="ECO:0000305" key="16">
    <source>
    </source>
</evidence>
<evidence type="ECO:0007744" key="17">
    <source>
        <dbReference type="PDB" id="1VA4"/>
    </source>
</evidence>
<evidence type="ECO:0007744" key="18">
    <source>
        <dbReference type="PDB" id="3HEA"/>
    </source>
</evidence>
<evidence type="ECO:0007744" key="19">
    <source>
        <dbReference type="PDB" id="3HI4"/>
    </source>
</evidence>
<evidence type="ECO:0007744" key="20">
    <source>
        <dbReference type="PDB" id="3IA2"/>
    </source>
</evidence>
<evidence type="ECO:0007744" key="21">
    <source>
        <dbReference type="PDB" id="3T4U"/>
    </source>
</evidence>
<evidence type="ECO:0007744" key="22">
    <source>
        <dbReference type="PDB" id="3T52"/>
    </source>
</evidence>
<evidence type="ECO:0007829" key="23">
    <source>
        <dbReference type="PDB" id="3IA2"/>
    </source>
</evidence>
<proteinExistence type="evidence at protein level"/>
<sequence>MSTFVAKDGTQIYFKDWGSGKPVLFSHGWLLDADMWEYQMEYLSSRGYRTIAFDRRGFGRSDQPWTGNDYDTFADDIAQLIEHLDLKEVTLVGFSMGGGDVARYIARHGSARVAGLVLLGAVTPLFGQKPDYPQGVPLDVFARFKTELLKDRAQFISDFNAPFYGINKGQVVSQGVQTQTLQIALLASLKATVDCVTAFAETDFRPDMAKIDVPTLVIHGDGDQIVPFETTGKVAAELIKGAELKVYKDAPHGFAVTHAQQLNEDLLAFLKR</sequence>
<protein>
    <recommendedName>
        <fullName evidence="10">Arylesterase</fullName>
        <ecNumber evidence="2 4 8 9">3.1.1.2</ecNumber>
    </recommendedName>
    <alternativeName>
        <fullName>Aryl-ester hydrolase</fullName>
    </alternativeName>
    <alternativeName>
        <fullName evidence="11">Carboxylic acid perhydrolase</fullName>
    </alternativeName>
    <alternativeName>
        <fullName evidence="12">PFE</fullName>
    </alternativeName>
    <alternativeName>
        <fullName>Putative bromoperoxidase</fullName>
        <ecNumber>1.-.-.-</ecNumber>
    </alternativeName>
</protein>
<feature type="initiator methionine" description="Removed" evidence="2">
    <location>
        <position position="1"/>
    </location>
</feature>
<feature type="chain" id="PRO_0000207059" description="Arylesterase">
    <location>
        <begin position="2"/>
        <end position="272"/>
    </location>
</feature>
<feature type="domain" description="AB hydrolase-1" evidence="1">
    <location>
        <begin position="21"/>
        <end position="253"/>
    </location>
</feature>
<feature type="active site" evidence="14">
    <location>
        <position position="95"/>
    </location>
</feature>
<feature type="active site" evidence="14">
    <location>
        <position position="223"/>
    </location>
</feature>
<feature type="active site" evidence="14">
    <location>
        <position position="252"/>
    </location>
</feature>
<feature type="binding site" evidence="5 19">
    <location>
        <position position="29"/>
    </location>
    <ligand>
        <name>acetate</name>
        <dbReference type="ChEBI" id="CHEBI:30089"/>
    </ligand>
</feature>
<feature type="binding site" evidence="5 19">
    <location>
        <position position="96"/>
    </location>
    <ligand>
        <name>acetate</name>
        <dbReference type="ChEBI" id="CHEBI:30089"/>
    </ligand>
</feature>
<feature type="mutagenesis site" description="125-fold increase in catalytic efficiency for perhydrolase activity with acetic acid as substrate. 2-fold decrease in catalytic efficiency for perhydrolase activity with ethyl acetate as substrate. 1.5-fold increase in catalytic efficiency for hydrolase activity with ethyl acetate as substrate. 2.4-fold increase in kcat for hydrolysis of peracetic acid." evidence="7">
    <original>L</original>
    <variation>I</variation>
    <location>
        <position position="30"/>
    </location>
</feature>
<feature type="mutagenesis site" description="Shows faster acetyl-enzyme formation. Tenfold more efficient at hydrolysis than perhydrolysis with methyl acetate as substrate. 3-fold decrease in catalytic efficiency for hydrolase activity with methyl acetate as substrate. 15-fold decrease in catalytic efficiency for perhydrolase activity with methyl acetate as substrate (PubMed:22618813). 100-fold decrease in hydrolase activity with 4-nitrophenyl acetate as substrate. 28-fold increase in perhydrolase activity with acetate as substrate (PubMed:15803517). 100-fold increase in catalytic efficiency with acetic acid as substrate. 50-fold increase in catalytic efficiency with acetic acid as substrate; when associated with H-58 (PubMed:20112920)." evidence="4 5 6">
    <original>L</original>
    <variation>P</variation>
    <location>
        <position position="30"/>
    </location>
</feature>
<feature type="mutagenesis site" description="50-fold increase in catalytic efficiency with acetic acid as substrate; when associated with P-30." evidence="5">
    <original>F</original>
    <variation>H</variation>
    <location>
        <position position="58"/>
    </location>
</feature>
<feature type="mutagenesis site" description="Does not affect esterase and perhydrolase activities." evidence="4">
    <original>Y</original>
    <variation>M</variation>
    <location>
        <position position="70"/>
    </location>
</feature>
<feature type="mutagenesis site" description="4-fold decrease in esterase activity. Loss of perhydrolase activity." evidence="4">
    <original>M</original>
    <variation>T</variation>
    <location>
        <position position="96"/>
    </location>
</feature>
<feature type="mutagenesis site" description="Small decrease in esterase and perhydrolase activities." evidence="4">
    <original>D</original>
    <variation>E</variation>
    <location>
        <position position="100"/>
    </location>
</feature>
<feature type="mutagenesis site" description="Does not affect esterase and perhydrolase activities." evidence="4">
    <original>T</original>
    <variation>P</variation>
    <location>
        <position position="123"/>
    </location>
</feature>
<feature type="mutagenesis site" description="3-fold increase in esterase activity. No change in perhydrolase activity." evidence="4">
    <original>F</original>
    <variation>I</variation>
    <location>
        <position position="228"/>
    </location>
</feature>
<feature type="strand" evidence="23">
    <location>
        <begin position="3"/>
        <end position="5"/>
    </location>
</feature>
<feature type="strand" evidence="23">
    <location>
        <begin position="11"/>
        <end position="26"/>
    </location>
</feature>
<feature type="helix" evidence="23">
    <location>
        <begin position="33"/>
        <end position="36"/>
    </location>
</feature>
<feature type="helix" evidence="23">
    <location>
        <begin position="37"/>
        <end position="44"/>
    </location>
</feature>
<feature type="turn" evidence="23">
    <location>
        <begin position="45"/>
        <end position="47"/>
    </location>
</feature>
<feature type="strand" evidence="23">
    <location>
        <begin position="49"/>
        <end position="53"/>
    </location>
</feature>
<feature type="helix" evidence="23">
    <location>
        <begin position="70"/>
        <end position="84"/>
    </location>
</feature>
<feature type="strand" evidence="23">
    <location>
        <begin position="88"/>
        <end position="94"/>
    </location>
</feature>
<feature type="helix" evidence="23">
    <location>
        <begin position="97"/>
        <end position="108"/>
    </location>
</feature>
<feature type="strand" evidence="23">
    <location>
        <begin position="113"/>
        <end position="120"/>
    </location>
</feature>
<feature type="helix" evidence="23">
    <location>
        <begin position="138"/>
        <end position="164"/>
    </location>
</feature>
<feature type="helix" evidence="23">
    <location>
        <begin position="166"/>
        <end position="168"/>
    </location>
</feature>
<feature type="helix" evidence="23">
    <location>
        <begin position="174"/>
        <end position="186"/>
    </location>
</feature>
<feature type="helix" evidence="23">
    <location>
        <begin position="189"/>
        <end position="201"/>
    </location>
</feature>
<feature type="helix" evidence="23">
    <location>
        <begin position="205"/>
        <end position="208"/>
    </location>
</feature>
<feature type="strand" evidence="23">
    <location>
        <begin position="215"/>
        <end position="220"/>
    </location>
</feature>
<feature type="strand" evidence="23">
    <location>
        <begin position="224"/>
        <end position="226"/>
    </location>
</feature>
<feature type="helix" evidence="23">
    <location>
        <begin position="228"/>
        <end position="230"/>
    </location>
</feature>
<feature type="helix" evidence="23">
    <location>
        <begin position="232"/>
        <end position="238"/>
    </location>
</feature>
<feature type="strand" evidence="23">
    <location>
        <begin position="243"/>
        <end position="247"/>
    </location>
</feature>
<feature type="helix" evidence="23">
    <location>
        <begin position="254"/>
        <end position="257"/>
    </location>
</feature>
<feature type="helix" evidence="23">
    <location>
        <begin position="259"/>
        <end position="270"/>
    </location>
</feature>
<gene>
    <name evidence="12" type="primary">estF</name>
</gene>
<comment type="function">
    <text evidence="2 3 4 5 6 8 9">Hydrolyzes phenolic esters, such as phenyl acetate, nitrophenyl acetate and naphtyl acetate (PubMed:1368608, PubMed:15803517, PubMed:7704276, PubMed:9571805). Can act on a wide range of esters, but reaction rate and enantioselectivity differ significantly depending on the substrate (PubMed:1368608, PubMed:9571805). Shows a preference for esters with small acyl groups (PubMed:15213385). Also shows low perhydrolase activity, and catalyzes the reversible formation of peroxycarboxylic acids from carboxylic acids and hydrogen peroxide (PubMed:15803517, PubMed:20112920, PubMed:22618813). In vitro, enzyme-generated peracetic acid oxidizes bromide ion to bromonium, which reacts with monochlorodimedone to form bromochlorodimedone (PubMed:20112920, PubMed:22618813, PubMed:7704276).</text>
</comment>
<comment type="catalytic activity">
    <reaction evidence="2 4 8 9">
        <text>a phenyl acetate + H2O = a phenol + acetate + H(+)</text>
        <dbReference type="Rhea" id="RHEA:17309"/>
        <dbReference type="ChEBI" id="CHEBI:15377"/>
        <dbReference type="ChEBI" id="CHEBI:15378"/>
        <dbReference type="ChEBI" id="CHEBI:30089"/>
        <dbReference type="ChEBI" id="CHEBI:33853"/>
        <dbReference type="ChEBI" id="CHEBI:140310"/>
        <dbReference type="EC" id="3.1.1.2"/>
    </reaction>
</comment>
<comment type="catalytic activity">
    <reaction evidence="4 5">
        <text>peracetic acid + H2O = acetate + H2O2 + H(+)</text>
        <dbReference type="Rhea" id="RHEA:68392"/>
        <dbReference type="ChEBI" id="CHEBI:15377"/>
        <dbReference type="ChEBI" id="CHEBI:15378"/>
        <dbReference type="ChEBI" id="CHEBI:16240"/>
        <dbReference type="ChEBI" id="CHEBI:30089"/>
        <dbReference type="ChEBI" id="CHEBI:42530"/>
    </reaction>
</comment>
<comment type="catalytic activity">
    <reaction evidence="4 5 6">
        <text>a percarboxylic acid + H2O = a carboxylate + H2O2 + H(+)</text>
        <dbReference type="Rhea" id="RHEA:68396"/>
        <dbReference type="ChEBI" id="CHEBI:15377"/>
        <dbReference type="ChEBI" id="CHEBI:15378"/>
        <dbReference type="ChEBI" id="CHEBI:16240"/>
        <dbReference type="ChEBI" id="CHEBI:29067"/>
        <dbReference type="ChEBI" id="CHEBI:177878"/>
    </reaction>
</comment>
<comment type="biophysicochemical properties">
    <kinetics>
        <KM evidence="8">92 uM for 4-nitrophenyl acetate</KM>
        <KM evidence="4">2.8 mM for 4-nitrophenyl acetate</KM>
        <KM evidence="5">33 mM for ethyl acetate</KM>
        <KM evidence="5">43 mM for methyl acetate</KM>
        <KM evidence="6">60 mM for methyl acetate</KM>
        <KM evidence="5">0.041 mM for peracetic acid</KM>
        <KM evidence="5">500 mM for acetic acid</KM>
        <KM evidence="5">3.3 mM for hydrogen peroxide</KM>
        <KM evidence="4">17 mM for H(2)O(2)</KM>
        <text evidence="5 6">kcat is 9 sec(-1) with ethyl acetate as substrate. kcat is 25 sec(-1) with methyl acetate as substrate. kcat is 100 sec(-1) with peracetic acid as substrate. kcat is 0.12 sec(-1) with acetic acid as substrate. kcat is 0.094 sec(-1) with hydrogen peroxide as substrate (PubMed:20112920). kcat is 15 sec(-1) with methyl acetate as substrate (PubMed:22618813).</text>
    </kinetics>
    <phDependence>
        <text evidence="8">Optimum pH is above 9.0 for esterase activity.</text>
    </phDependence>
    <temperatureDependence>
        <text evidence="8">Optimum temperature is 70 degrees Celsius for esterase activity.</text>
    </temperatureDependence>
</comment>
<comment type="subunit">
    <text evidence="3">Dimer of trimers.</text>
</comment>
<comment type="miscellaneous">
    <text evidence="7 13 15 16">It is unlikely that perhydrolysis is the natural function of perhydrolases. Instead, perhydrolysis is probably an accidental (promiscuous) activity (Probable). Perhydrolysis is an important reaction that makes peroxycarboxylic acids, which are useful oxidants in organic chemistry, for lignin removal and pulp bleaching and for disinfecting wastewater and disinfecting equipment for food and medical applications (PubMed:23325572). Perhydrolases were previously known as metal-free haloperoxidases (Probable).</text>
</comment>
<comment type="similarity">
    <text evidence="13">Belongs to the AB hydrolase superfamily. Bacterial non-heme haloperoxidase / perhydrolase family.</text>
</comment>
<comment type="sequence caution" evidence="13">
    <conflict type="frameshift">
        <sequence resource="EMBL-CDS" id="BAA02052"/>
    </conflict>
</comment>
<name>ESTE_PSEFL</name>
<organism>
    <name type="scientific">Pseudomonas fluorescens</name>
    <dbReference type="NCBI Taxonomy" id="294"/>
    <lineage>
        <taxon>Bacteria</taxon>
        <taxon>Pseudomonadati</taxon>
        <taxon>Pseudomonadota</taxon>
        <taxon>Gammaproteobacteria</taxon>
        <taxon>Pseudomonadales</taxon>
        <taxon>Pseudomonadaceae</taxon>
        <taxon>Pseudomonas</taxon>
    </lineage>
</organism>